<comment type="function">
    <text evidence="1">Plays a role in cell envelope biogenesis, maintenance of cell envelope integrity and membrane homeostasis.</text>
</comment>
<comment type="subcellular location">
    <subcellularLocation>
        <location evidence="1">Cell inner membrane</location>
        <topology evidence="1">Multi-pass membrane protein</topology>
    </subcellularLocation>
</comment>
<comment type="similarity">
    <text evidence="1">Belongs to the YciB family.</text>
</comment>
<name>YCIB_PSEE4</name>
<protein>
    <recommendedName>
        <fullName evidence="1">Inner membrane-spanning protein YciB</fullName>
    </recommendedName>
</protein>
<sequence>MKQFIDFIPLLLFFIVYKLDPRPVEFAGHGFEFGGIYSATAMLIVSSVVVYGALFLRHGKLEKGQLLTLVACLVFGGLTLAFHSETFLKWKAPVVNWLFALAFAGSHFIGDRVLIKRIMGHALTLPETVWNRLNVAWIGFFLVCGAANLFVAFTFQDFWVDFKVFGSLGMTVIFLVAQGVYLSRHLHDADPSTSKPKD</sequence>
<dbReference type="EMBL" id="CT573326">
    <property type="protein sequence ID" value="CAK16612.1"/>
    <property type="molecule type" value="Genomic_DNA"/>
</dbReference>
<dbReference type="RefSeq" id="WP_011534987.1">
    <property type="nucleotide sequence ID" value="NC_008027.1"/>
</dbReference>
<dbReference type="STRING" id="384676.PSEEN3905"/>
<dbReference type="GeneID" id="32806941"/>
<dbReference type="KEGG" id="pen:PSEEN3905"/>
<dbReference type="eggNOG" id="COG2917">
    <property type="taxonomic scope" value="Bacteria"/>
</dbReference>
<dbReference type="HOGENOM" id="CLU_089554_2_0_6"/>
<dbReference type="OrthoDB" id="9788219at2"/>
<dbReference type="Proteomes" id="UP000000658">
    <property type="component" value="Chromosome"/>
</dbReference>
<dbReference type="GO" id="GO:0005886">
    <property type="term" value="C:plasma membrane"/>
    <property type="evidence" value="ECO:0007669"/>
    <property type="project" value="UniProtKB-SubCell"/>
</dbReference>
<dbReference type="HAMAP" id="MF_00189">
    <property type="entry name" value="YciB"/>
    <property type="match status" value="1"/>
</dbReference>
<dbReference type="InterPro" id="IPR006008">
    <property type="entry name" value="YciB"/>
</dbReference>
<dbReference type="NCBIfam" id="TIGR00997">
    <property type="entry name" value="ispZ"/>
    <property type="match status" value="1"/>
</dbReference>
<dbReference type="NCBIfam" id="NF001325">
    <property type="entry name" value="PRK00259.1-3"/>
    <property type="match status" value="1"/>
</dbReference>
<dbReference type="NCBIfam" id="NF001327">
    <property type="entry name" value="PRK00259.1-5"/>
    <property type="match status" value="1"/>
</dbReference>
<dbReference type="PANTHER" id="PTHR36917:SF1">
    <property type="entry name" value="INNER MEMBRANE-SPANNING PROTEIN YCIB"/>
    <property type="match status" value="1"/>
</dbReference>
<dbReference type="PANTHER" id="PTHR36917">
    <property type="entry name" value="INTRACELLULAR SEPTATION PROTEIN A-RELATED"/>
    <property type="match status" value="1"/>
</dbReference>
<dbReference type="Pfam" id="PF04279">
    <property type="entry name" value="IspA"/>
    <property type="match status" value="1"/>
</dbReference>
<gene>
    <name evidence="1" type="primary">yciB</name>
    <name type="ordered locus">PSEEN3905</name>
</gene>
<accession>Q1I6X0</accession>
<organism>
    <name type="scientific">Pseudomonas entomophila (strain L48)</name>
    <dbReference type="NCBI Taxonomy" id="384676"/>
    <lineage>
        <taxon>Bacteria</taxon>
        <taxon>Pseudomonadati</taxon>
        <taxon>Pseudomonadota</taxon>
        <taxon>Gammaproteobacteria</taxon>
        <taxon>Pseudomonadales</taxon>
        <taxon>Pseudomonadaceae</taxon>
        <taxon>Pseudomonas</taxon>
    </lineage>
</organism>
<evidence type="ECO:0000255" key="1">
    <source>
        <dbReference type="HAMAP-Rule" id="MF_00189"/>
    </source>
</evidence>
<proteinExistence type="inferred from homology"/>
<feature type="chain" id="PRO_1000021043" description="Inner membrane-spanning protein YciB">
    <location>
        <begin position="1"/>
        <end position="198"/>
    </location>
</feature>
<feature type="transmembrane region" description="Helical" evidence="1">
    <location>
        <begin position="36"/>
        <end position="56"/>
    </location>
</feature>
<feature type="transmembrane region" description="Helical" evidence="1">
    <location>
        <begin position="64"/>
        <end position="84"/>
    </location>
</feature>
<feature type="transmembrane region" description="Helical" evidence="1">
    <location>
        <begin position="90"/>
        <end position="110"/>
    </location>
</feature>
<feature type="transmembrane region" description="Helical" evidence="1">
    <location>
        <begin position="135"/>
        <end position="155"/>
    </location>
</feature>
<feature type="transmembrane region" description="Helical" evidence="1">
    <location>
        <begin position="162"/>
        <end position="182"/>
    </location>
</feature>
<keyword id="KW-0997">Cell inner membrane</keyword>
<keyword id="KW-1003">Cell membrane</keyword>
<keyword id="KW-0472">Membrane</keyword>
<keyword id="KW-0812">Transmembrane</keyword>
<keyword id="KW-1133">Transmembrane helix</keyword>
<reference key="1">
    <citation type="journal article" date="2006" name="Nat. Biotechnol.">
        <title>Complete genome sequence of the entomopathogenic and metabolically versatile soil bacterium Pseudomonas entomophila.</title>
        <authorList>
            <person name="Vodovar N."/>
            <person name="Vallenet D."/>
            <person name="Cruveiller S."/>
            <person name="Rouy Z."/>
            <person name="Barbe V."/>
            <person name="Acosta C."/>
            <person name="Cattolico L."/>
            <person name="Jubin C."/>
            <person name="Lajus A."/>
            <person name="Segurens B."/>
            <person name="Vacherie B."/>
            <person name="Wincker P."/>
            <person name="Weissenbach J."/>
            <person name="Lemaitre B."/>
            <person name="Medigue C."/>
            <person name="Boccard F."/>
        </authorList>
    </citation>
    <scope>NUCLEOTIDE SEQUENCE [LARGE SCALE GENOMIC DNA]</scope>
    <source>
        <strain>L48</strain>
    </source>
</reference>